<sequence>MGLEKSLILFSLLVLVLGWVQPSLGRKPSVQDFKRQHMDPDSPPNSRPTYCNQMMKRRGMTKGSCKRVNTFVHESWATVKAICSQRQMTCKTSSRNNCHKSSSPLHITDCRLKGSSKYPNCDYTTTNSQKHIIIACEGNPLVPVHYDASV</sequence>
<evidence type="ECO:0000250" key="1"/>
<evidence type="ECO:0000305" key="2"/>
<dbReference type="EC" id="4.6.1.18"/>
<dbReference type="EMBL" id="AJ315459">
    <property type="protein sequence ID" value="CAC86440.1"/>
    <property type="molecule type" value="Genomic_DNA"/>
</dbReference>
<dbReference type="SMR" id="Q8VD92"/>
<dbReference type="GO" id="GO:0005576">
    <property type="term" value="C:extracellular region"/>
    <property type="evidence" value="ECO:0007669"/>
    <property type="project" value="UniProtKB-SubCell"/>
</dbReference>
<dbReference type="GO" id="GO:0016829">
    <property type="term" value="F:lyase activity"/>
    <property type="evidence" value="ECO:0007669"/>
    <property type="project" value="UniProtKB-KW"/>
</dbReference>
<dbReference type="GO" id="GO:0003676">
    <property type="term" value="F:nucleic acid binding"/>
    <property type="evidence" value="ECO:0007669"/>
    <property type="project" value="InterPro"/>
</dbReference>
<dbReference type="GO" id="GO:0004522">
    <property type="term" value="F:ribonuclease A activity"/>
    <property type="evidence" value="ECO:0007669"/>
    <property type="project" value="UniProtKB-EC"/>
</dbReference>
<dbReference type="GO" id="GO:0050830">
    <property type="term" value="P:defense response to Gram-positive bacterium"/>
    <property type="evidence" value="ECO:0007669"/>
    <property type="project" value="TreeGrafter"/>
</dbReference>
<dbReference type="CDD" id="cd06265">
    <property type="entry name" value="RNase_A_canonical"/>
    <property type="match status" value="1"/>
</dbReference>
<dbReference type="FunFam" id="3.10.130.10:FF:000001">
    <property type="entry name" value="Ribonuclease pancreatic"/>
    <property type="match status" value="1"/>
</dbReference>
<dbReference type="Gene3D" id="3.10.130.10">
    <property type="entry name" value="Ribonuclease A-like domain"/>
    <property type="match status" value="1"/>
</dbReference>
<dbReference type="InterPro" id="IPR001427">
    <property type="entry name" value="RNaseA"/>
</dbReference>
<dbReference type="InterPro" id="IPR036816">
    <property type="entry name" value="RNaseA-like_dom_sf"/>
</dbReference>
<dbReference type="InterPro" id="IPR023411">
    <property type="entry name" value="RNaseA_AS"/>
</dbReference>
<dbReference type="InterPro" id="IPR023412">
    <property type="entry name" value="RNaseA_domain"/>
</dbReference>
<dbReference type="PANTHER" id="PTHR11437">
    <property type="entry name" value="RIBONUCLEASE"/>
    <property type="match status" value="1"/>
</dbReference>
<dbReference type="PANTHER" id="PTHR11437:SF24">
    <property type="entry name" value="RIBONUCLEASE PANCREATIC"/>
    <property type="match status" value="1"/>
</dbReference>
<dbReference type="Pfam" id="PF00074">
    <property type="entry name" value="RnaseA"/>
    <property type="match status" value="1"/>
</dbReference>
<dbReference type="PRINTS" id="PR00794">
    <property type="entry name" value="RIBONUCLEASE"/>
</dbReference>
<dbReference type="SMART" id="SM00092">
    <property type="entry name" value="RNAse_Pc"/>
    <property type="match status" value="1"/>
</dbReference>
<dbReference type="SUPFAM" id="SSF54076">
    <property type="entry name" value="RNase A-like"/>
    <property type="match status" value="1"/>
</dbReference>
<dbReference type="PROSITE" id="PS00127">
    <property type="entry name" value="RNASE_PANCREATIC"/>
    <property type="match status" value="1"/>
</dbReference>
<comment type="function">
    <text evidence="1">Endonuclease that catalyzes the cleavage of RNA on the 3' side of pyrimidine nucleotides. Acts on single-stranded and double-stranded RNA (By similarity).</text>
</comment>
<comment type="catalytic activity">
    <reaction>
        <text>an [RNA] containing cytidine + H2O = an [RNA]-3'-cytidine-3'-phosphate + a 5'-hydroxy-ribonucleotide-3'-[RNA].</text>
        <dbReference type="EC" id="4.6.1.18"/>
    </reaction>
</comment>
<comment type="catalytic activity">
    <reaction>
        <text>an [RNA] containing uridine + H2O = an [RNA]-3'-uridine-3'-phosphate + a 5'-hydroxy-ribonucleotide-3'-[RNA].</text>
        <dbReference type="EC" id="4.6.1.18"/>
    </reaction>
</comment>
<comment type="subunit">
    <text evidence="1">Monomer.</text>
</comment>
<comment type="subcellular location">
    <subcellularLocation>
        <location evidence="1">Secreted</location>
    </subcellularLocation>
</comment>
<comment type="similarity">
    <text evidence="2">Belongs to the pancreatic ribonuclease family.</text>
</comment>
<organism>
    <name type="scientific">Rattus exulans</name>
    <name type="common">Polynesian rat</name>
    <name type="synonym">Small spiny rice-field rat</name>
    <dbReference type="NCBI Taxonomy" id="34854"/>
    <lineage>
        <taxon>Eukaryota</taxon>
        <taxon>Metazoa</taxon>
        <taxon>Chordata</taxon>
        <taxon>Craniata</taxon>
        <taxon>Vertebrata</taxon>
        <taxon>Euteleostomi</taxon>
        <taxon>Mammalia</taxon>
        <taxon>Eutheria</taxon>
        <taxon>Euarchontoglires</taxon>
        <taxon>Glires</taxon>
        <taxon>Rodentia</taxon>
        <taxon>Myomorpha</taxon>
        <taxon>Muroidea</taxon>
        <taxon>Muridae</taxon>
        <taxon>Murinae</taxon>
        <taxon>Rattus</taxon>
    </lineage>
</organism>
<keyword id="KW-1015">Disulfide bond</keyword>
<keyword id="KW-0255">Endonuclease</keyword>
<keyword id="KW-0378">Hydrolase</keyword>
<keyword id="KW-0456">Lyase</keyword>
<keyword id="KW-0540">Nuclease</keyword>
<keyword id="KW-0964">Secreted</keyword>
<keyword id="KW-0732">Signal</keyword>
<name>RNS1D_RATEX</name>
<protein>
    <recommendedName>
        <fullName>Ribonuclease pancreatic delta-type</fullName>
        <ecNumber>4.6.1.18</ecNumber>
    </recommendedName>
    <alternativeName>
        <fullName>RNase 1 delta</fullName>
    </alternativeName>
</protein>
<accession>Q8VD92</accession>
<proteinExistence type="inferred from homology"/>
<feature type="signal peptide" evidence="1">
    <location>
        <begin position="1"/>
        <end position="25"/>
    </location>
</feature>
<feature type="chain" id="PRO_0000234937" description="Ribonuclease pancreatic delta-type">
    <location>
        <begin position="26"/>
        <end position="150"/>
    </location>
</feature>
<feature type="active site" description="Proton acceptor" evidence="1">
    <location>
        <position position="37"/>
    </location>
</feature>
<feature type="active site" description="Proton donor" evidence="1">
    <location>
        <position position="145"/>
    </location>
</feature>
<feature type="binding site" evidence="1">
    <location>
        <position position="35"/>
    </location>
    <ligand>
        <name>substrate</name>
    </ligand>
</feature>
<feature type="binding site" evidence="1">
    <location>
        <begin position="66"/>
        <end position="70"/>
    </location>
    <ligand>
        <name>substrate</name>
    </ligand>
</feature>
<feature type="binding site" evidence="1">
    <location>
        <position position="91"/>
    </location>
    <ligand>
        <name>substrate</name>
    </ligand>
</feature>
<feature type="binding site" evidence="1">
    <location>
        <position position="111"/>
    </location>
    <ligand>
        <name>substrate</name>
    </ligand>
</feature>
<feature type="disulfide bond" evidence="1">
    <location>
        <begin position="51"/>
        <end position="110"/>
    </location>
</feature>
<feature type="disulfide bond" evidence="1">
    <location>
        <begin position="65"/>
        <end position="121"/>
    </location>
</feature>
<feature type="disulfide bond" evidence="1">
    <location>
        <begin position="83"/>
        <end position="136"/>
    </location>
</feature>
<feature type="disulfide bond" evidence="1">
    <location>
        <begin position="90"/>
        <end position="98"/>
    </location>
</feature>
<reference key="1">
    <citation type="journal article" date="2002" name="J. Mol. Evol.">
        <title>Pancreatic-type ribonuclease 1 gene duplications in rat species.</title>
        <authorList>
            <person name="Dubois J.-Y.F."/>
            <person name="Jekel P.A."/>
            <person name="Mulder P.P.M.F.A."/>
            <person name="Bussink A.P."/>
            <person name="Catzeflis F.M."/>
            <person name="Carsana A."/>
            <person name="Beintema J.J."/>
        </authorList>
    </citation>
    <scope>NUCLEOTIDE SEQUENCE [GENOMIC DNA]</scope>
</reference>